<comment type="function">
    <text evidence="1">Purine salvage pathway enzyme that catalyzes the transfer of the ribosyl-5-phosphate group from 5-phospho-alpha-D-ribose 1-diphosphate (PRPP) to the N9 position of the 6-oxopurines guanine and xanthine to form the corresponding ribonucleotides GMP (guanosine 5'-monophosphate) and XMP (xanthosine 5'-monophosphate), with the release of PPi. To a lesser extent, also acts on hypoxanthine.</text>
</comment>
<comment type="catalytic activity">
    <reaction evidence="1">
        <text>GMP + diphosphate = guanine + 5-phospho-alpha-D-ribose 1-diphosphate</text>
        <dbReference type="Rhea" id="RHEA:25424"/>
        <dbReference type="ChEBI" id="CHEBI:16235"/>
        <dbReference type="ChEBI" id="CHEBI:33019"/>
        <dbReference type="ChEBI" id="CHEBI:58017"/>
        <dbReference type="ChEBI" id="CHEBI:58115"/>
    </reaction>
    <physiologicalReaction direction="right-to-left" evidence="1">
        <dbReference type="Rhea" id="RHEA:25426"/>
    </physiologicalReaction>
</comment>
<comment type="catalytic activity">
    <reaction evidence="1">
        <text>XMP + diphosphate = xanthine + 5-phospho-alpha-D-ribose 1-diphosphate</text>
        <dbReference type="Rhea" id="RHEA:10800"/>
        <dbReference type="ChEBI" id="CHEBI:17712"/>
        <dbReference type="ChEBI" id="CHEBI:33019"/>
        <dbReference type="ChEBI" id="CHEBI:57464"/>
        <dbReference type="ChEBI" id="CHEBI:58017"/>
        <dbReference type="EC" id="2.4.2.22"/>
    </reaction>
    <physiologicalReaction direction="right-to-left" evidence="1">
        <dbReference type="Rhea" id="RHEA:10802"/>
    </physiologicalReaction>
</comment>
<comment type="catalytic activity">
    <reaction evidence="1">
        <text>IMP + diphosphate = hypoxanthine + 5-phospho-alpha-D-ribose 1-diphosphate</text>
        <dbReference type="Rhea" id="RHEA:17973"/>
        <dbReference type="ChEBI" id="CHEBI:17368"/>
        <dbReference type="ChEBI" id="CHEBI:33019"/>
        <dbReference type="ChEBI" id="CHEBI:58017"/>
        <dbReference type="ChEBI" id="CHEBI:58053"/>
    </reaction>
    <physiologicalReaction direction="right-to-left" evidence="1">
        <dbReference type="Rhea" id="RHEA:17975"/>
    </physiologicalReaction>
</comment>
<comment type="cofactor">
    <cofactor evidence="1">
        <name>Mg(2+)</name>
        <dbReference type="ChEBI" id="CHEBI:18420"/>
    </cofactor>
</comment>
<comment type="pathway">
    <text evidence="1">Purine metabolism; GMP biosynthesis via salvage pathway; GMP from guanine: step 1/1.</text>
</comment>
<comment type="pathway">
    <text evidence="1">Purine metabolism; XMP biosynthesis via salvage pathway; XMP from xanthine: step 1/1.</text>
</comment>
<comment type="subunit">
    <text evidence="1">Homotetramer.</text>
</comment>
<comment type="subcellular location">
    <subcellularLocation>
        <location evidence="1">Cell inner membrane</location>
        <topology evidence="1">Peripheral membrane protein</topology>
    </subcellularLocation>
</comment>
<comment type="similarity">
    <text evidence="1">Belongs to the purine/pyrimidine phosphoribosyltransferase family. XGPT subfamily.</text>
</comment>
<gene>
    <name evidence="1" type="primary">gpt</name>
    <name type="ordered locus">HSM_1894</name>
</gene>
<sequence>MSEKYVVTWDMFQMHTRKLSERLLPATQWKGIIAVSRGGLFPAAVIARELGIRHIETVCISSYDHNQQGNLNVLHAAQVKNGGEGFIVVDDLVDTGNTARAIRELYPNARFVTVFAKPAGANLVDDYVIDIPQNTWIEQPWDMGITFVPPLARK</sequence>
<reference key="1">
    <citation type="submission" date="2008-02" db="EMBL/GenBank/DDBJ databases">
        <title>Complete sequence of Haemophilus somnus 2336.</title>
        <authorList>
            <consortium name="US DOE Joint Genome Institute"/>
            <person name="Siddaramappa S."/>
            <person name="Duncan A.J."/>
            <person name="Challacombe J.F."/>
            <person name="Rainey D."/>
            <person name="Gillaspy A.F."/>
            <person name="Carson M."/>
            <person name="Gipson J."/>
            <person name="Gipson M."/>
            <person name="Bruce D."/>
            <person name="Detter J.C."/>
            <person name="Han C.S."/>
            <person name="Land M."/>
            <person name="Tapia R."/>
            <person name="Thompson L.S."/>
            <person name="Orvis J."/>
            <person name="Zaitshik J."/>
            <person name="Barnes G."/>
            <person name="Brettin T.S."/>
            <person name="Dyer D.W."/>
            <person name="Inzana T.J."/>
        </authorList>
    </citation>
    <scope>NUCLEOTIDE SEQUENCE [LARGE SCALE GENOMIC DNA]</scope>
    <source>
        <strain>2336</strain>
    </source>
</reference>
<name>XGPT_HISS2</name>
<protein>
    <recommendedName>
        <fullName evidence="1">Xanthine-guanine phosphoribosyltransferase</fullName>
        <shortName evidence="1">XGPRT</shortName>
        <ecNumber evidence="1">2.4.2.-</ecNumber>
        <ecNumber evidence="1">2.4.2.22</ecNumber>
    </recommendedName>
    <alternativeName>
        <fullName evidence="1">Xanthine phosphoribosyltransferase</fullName>
    </alternativeName>
</protein>
<feature type="chain" id="PRO_1000088474" description="Xanthine-guanine phosphoribosyltransferase">
    <location>
        <begin position="1"/>
        <end position="154"/>
    </location>
</feature>
<feature type="binding site" evidence="1">
    <location>
        <begin position="37"/>
        <end position="38"/>
    </location>
    <ligand>
        <name>5-phospho-alpha-D-ribose 1-diphosphate</name>
        <dbReference type="ChEBI" id="CHEBI:58017"/>
    </ligand>
</feature>
<feature type="binding site" evidence="1">
    <location>
        <begin position="90"/>
        <end position="98"/>
    </location>
    <ligand>
        <name>5-phospho-alpha-D-ribose 1-diphosphate</name>
        <dbReference type="ChEBI" id="CHEBI:58017"/>
    </ligand>
</feature>
<feature type="binding site" evidence="1">
    <location>
        <position position="91"/>
    </location>
    <ligand>
        <name>Mg(2+)</name>
        <dbReference type="ChEBI" id="CHEBI:18420"/>
    </ligand>
</feature>
<feature type="binding site" evidence="1">
    <location>
        <begin position="94"/>
        <end position="98"/>
    </location>
    <ligand>
        <name>GMP</name>
        <dbReference type="ChEBI" id="CHEBI:58115"/>
    </ligand>
</feature>
<feature type="binding site" evidence="1">
    <location>
        <position position="94"/>
    </location>
    <ligand>
        <name>guanine</name>
        <dbReference type="ChEBI" id="CHEBI:16235"/>
    </ligand>
</feature>
<feature type="binding site" evidence="1">
    <location>
        <position position="94"/>
    </location>
    <ligand>
        <name>xanthine</name>
        <dbReference type="ChEBI" id="CHEBI:17712"/>
    </ligand>
</feature>
<feature type="binding site" evidence="1">
    <location>
        <begin position="136"/>
        <end position="137"/>
    </location>
    <ligand>
        <name>GMP</name>
        <dbReference type="ChEBI" id="CHEBI:58115"/>
    </ligand>
</feature>
<feature type="binding site" evidence="1">
    <location>
        <position position="137"/>
    </location>
    <ligand>
        <name>guanine</name>
        <dbReference type="ChEBI" id="CHEBI:16235"/>
    </ligand>
</feature>
<feature type="binding site" evidence="1">
    <location>
        <position position="137"/>
    </location>
    <ligand>
        <name>xanthine</name>
        <dbReference type="ChEBI" id="CHEBI:17712"/>
    </ligand>
</feature>
<accession>B0UWV5</accession>
<evidence type="ECO:0000255" key="1">
    <source>
        <dbReference type="HAMAP-Rule" id="MF_01903"/>
    </source>
</evidence>
<dbReference type="EC" id="2.4.2.-" evidence="1"/>
<dbReference type="EC" id="2.4.2.22" evidence="1"/>
<dbReference type="EMBL" id="CP000947">
    <property type="protein sequence ID" value="ACA31682.1"/>
    <property type="molecule type" value="Genomic_DNA"/>
</dbReference>
<dbReference type="RefSeq" id="WP_011608161.1">
    <property type="nucleotide sequence ID" value="NC_010519.1"/>
</dbReference>
<dbReference type="SMR" id="B0UWV5"/>
<dbReference type="STRING" id="228400.HSM_1894"/>
<dbReference type="GeneID" id="31488205"/>
<dbReference type="KEGG" id="hsm:HSM_1894"/>
<dbReference type="HOGENOM" id="CLU_080904_3_0_6"/>
<dbReference type="UniPathway" id="UPA00602">
    <property type="reaction ID" value="UER00658"/>
</dbReference>
<dbReference type="UniPathway" id="UPA00909">
    <property type="reaction ID" value="UER00887"/>
</dbReference>
<dbReference type="GO" id="GO:0005829">
    <property type="term" value="C:cytosol"/>
    <property type="evidence" value="ECO:0007669"/>
    <property type="project" value="TreeGrafter"/>
</dbReference>
<dbReference type="GO" id="GO:0005886">
    <property type="term" value="C:plasma membrane"/>
    <property type="evidence" value="ECO:0007669"/>
    <property type="project" value="UniProtKB-SubCell"/>
</dbReference>
<dbReference type="GO" id="GO:0052657">
    <property type="term" value="F:guanine phosphoribosyltransferase activity"/>
    <property type="evidence" value="ECO:0007669"/>
    <property type="project" value="RHEA"/>
</dbReference>
<dbReference type="GO" id="GO:0004422">
    <property type="term" value="F:hypoxanthine phosphoribosyltransferase activity"/>
    <property type="evidence" value="ECO:0007669"/>
    <property type="project" value="TreeGrafter"/>
</dbReference>
<dbReference type="GO" id="GO:0000287">
    <property type="term" value="F:magnesium ion binding"/>
    <property type="evidence" value="ECO:0007669"/>
    <property type="project" value="UniProtKB-UniRule"/>
</dbReference>
<dbReference type="GO" id="GO:0000310">
    <property type="term" value="F:xanthine phosphoribosyltransferase activity"/>
    <property type="evidence" value="ECO:0007669"/>
    <property type="project" value="UniProtKB-UniRule"/>
</dbReference>
<dbReference type="GO" id="GO:0032263">
    <property type="term" value="P:GMP salvage"/>
    <property type="evidence" value="ECO:0007669"/>
    <property type="project" value="UniProtKB-UniRule"/>
</dbReference>
<dbReference type="GO" id="GO:0032264">
    <property type="term" value="P:IMP salvage"/>
    <property type="evidence" value="ECO:0007669"/>
    <property type="project" value="TreeGrafter"/>
</dbReference>
<dbReference type="GO" id="GO:0006166">
    <property type="term" value="P:purine ribonucleoside salvage"/>
    <property type="evidence" value="ECO:0007669"/>
    <property type="project" value="UniProtKB-KW"/>
</dbReference>
<dbReference type="GO" id="GO:0032265">
    <property type="term" value="P:XMP salvage"/>
    <property type="evidence" value="ECO:0007669"/>
    <property type="project" value="UniProtKB-UniRule"/>
</dbReference>
<dbReference type="CDD" id="cd06223">
    <property type="entry name" value="PRTases_typeI"/>
    <property type="match status" value="1"/>
</dbReference>
<dbReference type="FunFam" id="3.40.50.2020:FF:000009">
    <property type="entry name" value="Xanthine phosphoribosyltransferase"/>
    <property type="match status" value="1"/>
</dbReference>
<dbReference type="Gene3D" id="3.40.50.2020">
    <property type="match status" value="1"/>
</dbReference>
<dbReference type="HAMAP" id="MF_01903">
    <property type="entry name" value="XGPRT"/>
    <property type="match status" value="1"/>
</dbReference>
<dbReference type="InterPro" id="IPR000836">
    <property type="entry name" value="PRibTrfase_dom"/>
</dbReference>
<dbReference type="InterPro" id="IPR029057">
    <property type="entry name" value="PRTase-like"/>
</dbReference>
<dbReference type="InterPro" id="IPR023747">
    <property type="entry name" value="Xanthine_Guanine_PRibTrfase"/>
</dbReference>
<dbReference type="NCBIfam" id="NF006613">
    <property type="entry name" value="PRK09177.1"/>
    <property type="match status" value="1"/>
</dbReference>
<dbReference type="PANTHER" id="PTHR39563">
    <property type="entry name" value="XANTHINE PHOSPHORIBOSYLTRANSFERASE"/>
    <property type="match status" value="1"/>
</dbReference>
<dbReference type="PANTHER" id="PTHR39563:SF1">
    <property type="entry name" value="XANTHINE-GUANINE PHOSPHORIBOSYLTRANSFERASE"/>
    <property type="match status" value="1"/>
</dbReference>
<dbReference type="Pfam" id="PF00156">
    <property type="entry name" value="Pribosyltran"/>
    <property type="match status" value="1"/>
</dbReference>
<dbReference type="SUPFAM" id="SSF53271">
    <property type="entry name" value="PRTase-like"/>
    <property type="match status" value="1"/>
</dbReference>
<dbReference type="PROSITE" id="PS00103">
    <property type="entry name" value="PUR_PYR_PR_TRANSFER"/>
    <property type="match status" value="1"/>
</dbReference>
<proteinExistence type="inferred from homology"/>
<keyword id="KW-0997">Cell inner membrane</keyword>
<keyword id="KW-1003">Cell membrane</keyword>
<keyword id="KW-0328">Glycosyltransferase</keyword>
<keyword id="KW-0460">Magnesium</keyword>
<keyword id="KW-0472">Membrane</keyword>
<keyword id="KW-0479">Metal-binding</keyword>
<keyword id="KW-0660">Purine salvage</keyword>
<keyword id="KW-0808">Transferase</keyword>
<organism>
    <name type="scientific">Histophilus somni (strain 2336)</name>
    <name type="common">Haemophilus somnus</name>
    <dbReference type="NCBI Taxonomy" id="228400"/>
    <lineage>
        <taxon>Bacteria</taxon>
        <taxon>Pseudomonadati</taxon>
        <taxon>Pseudomonadota</taxon>
        <taxon>Gammaproteobacteria</taxon>
        <taxon>Pasteurellales</taxon>
        <taxon>Pasteurellaceae</taxon>
        <taxon>Histophilus</taxon>
    </lineage>
</organism>